<accession>Q9QXT3</accession>
<accession>A6IAT5</accession>
<organism>
    <name type="scientific">Rattus norvegicus</name>
    <name type="common">Rat</name>
    <dbReference type="NCBI Taxonomy" id="10116"/>
    <lineage>
        <taxon>Eukaryota</taxon>
        <taxon>Metazoa</taxon>
        <taxon>Chordata</taxon>
        <taxon>Craniata</taxon>
        <taxon>Vertebrata</taxon>
        <taxon>Euteleostomi</taxon>
        <taxon>Mammalia</taxon>
        <taxon>Eutheria</taxon>
        <taxon>Euarchontoglires</taxon>
        <taxon>Glires</taxon>
        <taxon>Rodentia</taxon>
        <taxon>Myomorpha</taxon>
        <taxon>Muroidea</taxon>
        <taxon>Muridae</taxon>
        <taxon>Murinae</taxon>
        <taxon>Rattus</taxon>
    </lineage>
</organism>
<proteinExistence type="evidence at transcript level"/>
<gene>
    <name type="primary">Nat8</name>
    <name type="synonym">Cml4</name>
</gene>
<keyword id="KW-0012">Acyltransferase</keyword>
<keyword id="KW-0256">Endoplasmic reticulum</keyword>
<keyword id="KW-0472">Membrane</keyword>
<keyword id="KW-1185">Reference proteome</keyword>
<keyword id="KW-0735">Signal-anchor</keyword>
<keyword id="KW-0808">Transferase</keyword>
<keyword id="KW-0812">Transmembrane</keyword>
<keyword id="KW-1133">Transmembrane helix</keyword>
<feature type="chain" id="PRO_0000284693" description="N-acetyltransferase 8">
    <location>
        <begin position="1"/>
        <end position="222"/>
    </location>
</feature>
<feature type="topological domain" description="Cytoplasmic" evidence="2">
    <location>
        <begin position="1"/>
        <end position="35"/>
    </location>
</feature>
<feature type="transmembrane region" description="Helical; Signal-anchor for type II membrane protein" evidence="2">
    <location>
        <begin position="36"/>
        <end position="56"/>
    </location>
</feature>
<feature type="topological domain" description="Lumenal" evidence="2">
    <location>
        <begin position="57"/>
        <end position="222"/>
    </location>
</feature>
<feature type="domain" description="N-acetyltransferase" evidence="3">
    <location>
        <begin position="62"/>
        <end position="217"/>
    </location>
</feature>
<protein>
    <recommendedName>
        <fullName>N-acetyltransferase 8</fullName>
        <ecNumber evidence="2">2.3.1.-</ecNumber>
    </recommendedName>
    <alternativeName>
        <fullName>Acetyltransferase 2</fullName>
        <shortName>ATase2</shortName>
    </alternativeName>
    <alternativeName>
        <fullName>Camello-like protein 4</fullName>
    </alternativeName>
    <alternativeName>
        <fullName>Cysteinyl-conjugate N-acetyltransferase</fullName>
        <shortName>CCNAT</shortName>
        <ecNumber evidence="2">2.3.1.80</ecNumber>
    </alternativeName>
    <alternativeName>
        <fullName evidence="4">Protein-lysine N6-acetyltransferase 8</fullName>
    </alternativeName>
</protein>
<reference evidence="6" key="1">
    <citation type="journal article" date="2001" name="Dev. Biol.">
        <title>Overexpression of camello, a member of a novel protein family, reduces blastomere adhesion and inhibits gastrulation in Xenopus laevis.</title>
        <authorList>
            <person name="Popsueva A.E."/>
            <person name="Luchinskaya N.N."/>
            <person name="Ludwig A.V."/>
            <person name="Zinovjeva O.Y."/>
            <person name="Poteryaev D.A."/>
            <person name="Feigelman M.M."/>
            <person name="Ponomarev M.B."/>
            <person name="Berekelya L."/>
            <person name="Belyavsky A.V."/>
        </authorList>
    </citation>
    <scope>NUCLEOTIDE SEQUENCE [MRNA]</scope>
    <source>
        <tissue evidence="6">Kidney</tissue>
    </source>
</reference>
<reference key="2">
    <citation type="submission" date="2005-09" db="EMBL/GenBank/DDBJ databases">
        <authorList>
            <person name="Mural R.J."/>
            <person name="Adams M.D."/>
            <person name="Myers E.W."/>
            <person name="Smith H.O."/>
            <person name="Venter J.C."/>
        </authorList>
    </citation>
    <scope>NUCLEOTIDE SEQUENCE [LARGE SCALE GENOMIC DNA]</scope>
</reference>
<reference key="3">
    <citation type="journal article" date="1982" name="Mol. Pharmacol.">
        <title>Cysteine S-conjugate N-acetyltransferase from rat kidney microsomes.</title>
        <authorList>
            <person name="Duffel M.W."/>
            <person name="Jakoby W.B."/>
        </authorList>
    </citation>
    <scope>FUNCTION</scope>
</reference>
<dbReference type="EC" id="2.3.1.-" evidence="2"/>
<dbReference type="EC" id="2.3.1.80" evidence="2"/>
<dbReference type="EMBL" id="AF185570">
    <property type="protein sequence ID" value="AAF22298.1"/>
    <property type="molecule type" value="mRNA"/>
</dbReference>
<dbReference type="EMBL" id="CH473957">
    <property type="protein sequence ID" value="EDL91203.1"/>
    <property type="molecule type" value="Genomic_DNA"/>
</dbReference>
<dbReference type="RefSeq" id="NP_072157.1">
    <property type="nucleotide sequence ID" value="NM_022635.1"/>
</dbReference>
<dbReference type="RefSeq" id="XP_006236851.1">
    <property type="nucleotide sequence ID" value="XM_006236789.3"/>
</dbReference>
<dbReference type="RefSeq" id="XP_006236852.1">
    <property type="nucleotide sequence ID" value="XM_006236790.3"/>
</dbReference>
<dbReference type="SMR" id="Q9QXT3"/>
<dbReference type="FunCoup" id="Q9QXT3">
    <property type="interactions" value="74"/>
</dbReference>
<dbReference type="iPTMnet" id="Q9QXT3"/>
<dbReference type="PhosphoSitePlus" id="Q9QXT3"/>
<dbReference type="Ensembl" id="ENSRNOT00000021243.6">
    <property type="protein sequence ID" value="ENSRNOP00000021243.3"/>
    <property type="gene ID" value="ENSRNOG00000063398.1"/>
</dbReference>
<dbReference type="Ensembl" id="ENSRNOT00000097720.1">
    <property type="protein sequence ID" value="ENSRNOP00000080047.1"/>
    <property type="gene ID" value="ENSRNOG00000063398.1"/>
</dbReference>
<dbReference type="Ensembl" id="ENSRNOT00000099459.1">
    <property type="protein sequence ID" value="ENSRNOP00000080565.1"/>
    <property type="gene ID" value="ENSRNOG00000063398.1"/>
</dbReference>
<dbReference type="Ensembl" id="ENSRNOT00000102192.1">
    <property type="protein sequence ID" value="ENSRNOP00000083742.1"/>
    <property type="gene ID" value="ENSRNOG00000063398.1"/>
</dbReference>
<dbReference type="GeneID" id="64570"/>
<dbReference type="KEGG" id="rno:64570"/>
<dbReference type="UCSC" id="RGD:621609">
    <property type="organism name" value="rat"/>
</dbReference>
<dbReference type="AGR" id="RGD:621609"/>
<dbReference type="CTD" id="9027"/>
<dbReference type="RGD" id="621609">
    <property type="gene designation" value="Nat8"/>
</dbReference>
<dbReference type="GeneTree" id="ENSGT00950000182932"/>
<dbReference type="InParanoid" id="Q9QXT3"/>
<dbReference type="OMA" id="IFTEGMQ"/>
<dbReference type="OrthoDB" id="41532at2759"/>
<dbReference type="PhylomeDB" id="Q9QXT3"/>
<dbReference type="BioCyc" id="MetaCyc:MONOMER-10113"/>
<dbReference type="UniPathway" id="UPA00204"/>
<dbReference type="PRO" id="PR:Q9QXT3"/>
<dbReference type="Proteomes" id="UP000002494">
    <property type="component" value="Chromosome 4"/>
</dbReference>
<dbReference type="Proteomes" id="UP000234681">
    <property type="component" value="Chromosome 4"/>
</dbReference>
<dbReference type="GO" id="GO:0005789">
    <property type="term" value="C:endoplasmic reticulum membrane"/>
    <property type="evidence" value="ECO:0000250"/>
    <property type="project" value="UniProtKB"/>
</dbReference>
<dbReference type="GO" id="GO:0005793">
    <property type="term" value="C:endoplasmic reticulum-Golgi intermediate compartment"/>
    <property type="evidence" value="ECO:0000266"/>
    <property type="project" value="RGD"/>
</dbReference>
<dbReference type="GO" id="GO:0033116">
    <property type="term" value="C:endoplasmic reticulum-Golgi intermediate compartment membrane"/>
    <property type="evidence" value="ECO:0000250"/>
    <property type="project" value="UniProtKB"/>
</dbReference>
<dbReference type="GO" id="GO:0016020">
    <property type="term" value="C:membrane"/>
    <property type="evidence" value="ECO:0000250"/>
    <property type="project" value="UniProtKB"/>
</dbReference>
<dbReference type="GO" id="GO:0047198">
    <property type="term" value="F:L-cysteine-S-conjugate N-acetyltransferase activity"/>
    <property type="evidence" value="ECO:0000250"/>
    <property type="project" value="UniProtKB"/>
</dbReference>
<dbReference type="GO" id="GO:0004468">
    <property type="term" value="F:L-lysine N-acetyltransferase activity, acting on acetyl phosphate as donor"/>
    <property type="evidence" value="ECO:0000266"/>
    <property type="project" value="RGD"/>
</dbReference>
<dbReference type="GO" id="GO:0008080">
    <property type="term" value="F:N-acetyltransferase activity"/>
    <property type="evidence" value="ECO:0000318"/>
    <property type="project" value="GO_Central"/>
</dbReference>
<dbReference type="GO" id="GO:0061733">
    <property type="term" value="F:protein-lysine-acetyltransferase activity"/>
    <property type="evidence" value="ECO:0000250"/>
    <property type="project" value="UniProtKB"/>
</dbReference>
<dbReference type="GO" id="GO:0001702">
    <property type="term" value="P:gastrulation with mouth forming second"/>
    <property type="evidence" value="ECO:0000250"/>
    <property type="project" value="UniProtKB"/>
</dbReference>
<dbReference type="GO" id="GO:0006749">
    <property type="term" value="P:glutathione metabolic process"/>
    <property type="evidence" value="ECO:0007669"/>
    <property type="project" value="UniProtKB-UniPathway"/>
</dbReference>
<dbReference type="GO" id="GO:0018003">
    <property type="term" value="P:peptidyl-lysine N6-acetylation"/>
    <property type="evidence" value="ECO:0000250"/>
    <property type="project" value="UniProtKB"/>
</dbReference>
<dbReference type="GO" id="GO:0010628">
    <property type="term" value="P:positive regulation of gene expression"/>
    <property type="evidence" value="ECO:0000250"/>
    <property type="project" value="UniProtKB"/>
</dbReference>
<dbReference type="CDD" id="cd04301">
    <property type="entry name" value="NAT_SF"/>
    <property type="match status" value="1"/>
</dbReference>
<dbReference type="FunFam" id="3.40.630.30:FF:000118">
    <property type="entry name" value="N-acetyltransferase family 8 member 3"/>
    <property type="match status" value="1"/>
</dbReference>
<dbReference type="Gene3D" id="3.40.630.30">
    <property type="match status" value="1"/>
</dbReference>
<dbReference type="InterPro" id="IPR016181">
    <property type="entry name" value="Acyl_CoA_acyltransferase"/>
</dbReference>
<dbReference type="InterPro" id="IPR000182">
    <property type="entry name" value="GNAT_dom"/>
</dbReference>
<dbReference type="InterPro" id="IPR050769">
    <property type="entry name" value="NAT_camello-type"/>
</dbReference>
<dbReference type="PANTHER" id="PTHR13947">
    <property type="entry name" value="GNAT FAMILY N-ACETYLTRANSFERASE"/>
    <property type="match status" value="1"/>
</dbReference>
<dbReference type="PANTHER" id="PTHR13947:SF48">
    <property type="entry name" value="N-ACETYLTRANSFERASE 8-RELATED"/>
    <property type="match status" value="1"/>
</dbReference>
<dbReference type="Pfam" id="PF00583">
    <property type="entry name" value="Acetyltransf_1"/>
    <property type="match status" value="1"/>
</dbReference>
<dbReference type="SUPFAM" id="SSF55729">
    <property type="entry name" value="Acyl-CoA N-acyltransferases (Nat)"/>
    <property type="match status" value="1"/>
</dbReference>
<dbReference type="PROSITE" id="PS51186">
    <property type="entry name" value="GNAT"/>
    <property type="match status" value="1"/>
</dbReference>
<sequence>MASFHIRQFQERDYEQVVDMFSRGMKEHIPTAFRHLLLLPRTLLLLLGVPLALVLVSGSWLLAVVCIFFLLPFLWFLAGQPWKNYVSKCLHTDMADITKSYLSDRGSGFWVAESGGQIVGTVGALPVKDPPSGRKQLQLFRLSVSSQHRGQGIAKALVRTVLQFARDQGYTDVVLVTGLLQQGAVTLYYSMGFQKTGESFMDILTWLVDVSLIHFIYPLPSS</sequence>
<comment type="function">
    <text evidence="1 2 5">Endoplasmic reticulum-membrane(ER)-bound lysine N-acetyltransferase catalyzing the N6-acetylation of lysine residues in the lumen of the ER in various proteins, including PROM1 and BACE1, using acetyl-CoA as acetyl donor. Thereby, may regulate apoptosis through the acetylation and the regulation of the expression of PROM1. May also regulate amyloid beta-peptide secretion through acetylation of BACE1 and the regulation of its expression in neurons (By similarity). N(6)-lysine acetylation in the ER maintains protein homeostasis and regulates reticulophagy (By similarity). Alternatively, acetylates the free alpha-amino group of cysteine S-conjugates to form mercapturic acids (Probable). This is the final step in a major route for detoxification of a wide variety of reactive electrophiles which starts with their incorporation into glutathione S-conjugates. The glutathione S-conjugates are then further processed into cysteine S-conjugates and finally mercapturic acids which are water soluble and can be readily excreted in urine or bile (By similarity).</text>
</comment>
<comment type="catalytic activity">
    <reaction evidence="2">
        <text>L-lysyl-[protein] + acetyl-CoA = N(6)-acetyl-L-lysyl-[protein] + CoA + H(+)</text>
        <dbReference type="Rhea" id="RHEA:45948"/>
        <dbReference type="Rhea" id="RHEA-COMP:9752"/>
        <dbReference type="Rhea" id="RHEA-COMP:10731"/>
        <dbReference type="ChEBI" id="CHEBI:15378"/>
        <dbReference type="ChEBI" id="CHEBI:29969"/>
        <dbReference type="ChEBI" id="CHEBI:57287"/>
        <dbReference type="ChEBI" id="CHEBI:57288"/>
        <dbReference type="ChEBI" id="CHEBI:61930"/>
    </reaction>
    <physiologicalReaction direction="left-to-right" evidence="2">
        <dbReference type="Rhea" id="RHEA:45949"/>
    </physiologicalReaction>
</comment>
<comment type="catalytic activity">
    <reaction evidence="2">
        <text>an S-substituted L-cysteine + acetyl-CoA = an N-acetyl-L-cysteine-S-conjugate + CoA + H(+)</text>
        <dbReference type="Rhea" id="RHEA:19213"/>
        <dbReference type="ChEBI" id="CHEBI:15378"/>
        <dbReference type="ChEBI" id="CHEBI:57287"/>
        <dbReference type="ChEBI" id="CHEBI:57288"/>
        <dbReference type="ChEBI" id="CHEBI:58717"/>
        <dbReference type="ChEBI" id="CHEBI:58718"/>
        <dbReference type="EC" id="2.3.1.80"/>
    </reaction>
    <physiologicalReaction direction="left-to-right" evidence="2">
        <dbReference type="Rhea" id="RHEA:19214"/>
    </physiologicalReaction>
</comment>
<comment type="pathway">
    <text evidence="2">Sulfur metabolism; glutathione metabolism.</text>
</comment>
<comment type="subcellular location">
    <subcellularLocation>
        <location evidence="2">Endoplasmic reticulum-Golgi intermediate compartment membrane</location>
        <topology evidence="2">Single-pass type II membrane protein</topology>
    </subcellularLocation>
    <subcellularLocation>
        <location evidence="2">Endoplasmic reticulum membrane</location>
        <topology evidence="2">Single-pass type II membrane protein</topology>
    </subcellularLocation>
</comment>
<comment type="similarity">
    <text evidence="4">Belongs to the NAT8 family.</text>
</comment>
<name>NAT8_RAT</name>
<evidence type="ECO:0000250" key="1">
    <source>
        <dbReference type="UniProtKB" id="Q9JIY7"/>
    </source>
</evidence>
<evidence type="ECO:0000250" key="2">
    <source>
        <dbReference type="UniProtKB" id="Q9UHE5"/>
    </source>
</evidence>
<evidence type="ECO:0000255" key="3">
    <source>
        <dbReference type="PROSITE-ProRule" id="PRU00532"/>
    </source>
</evidence>
<evidence type="ECO:0000305" key="4"/>
<evidence type="ECO:0000305" key="5">
    <source>
    </source>
</evidence>
<evidence type="ECO:0000312" key="6">
    <source>
        <dbReference type="EMBL" id="AAF22298.1"/>
    </source>
</evidence>